<organism>
    <name type="scientific">Apis mellifera</name>
    <name type="common">Honeybee</name>
    <dbReference type="NCBI Taxonomy" id="7460"/>
    <lineage>
        <taxon>Eukaryota</taxon>
        <taxon>Metazoa</taxon>
        <taxon>Ecdysozoa</taxon>
        <taxon>Arthropoda</taxon>
        <taxon>Hexapoda</taxon>
        <taxon>Insecta</taxon>
        <taxon>Pterygota</taxon>
        <taxon>Neoptera</taxon>
        <taxon>Endopterygota</taxon>
        <taxon>Hymenoptera</taxon>
        <taxon>Apocrita</taxon>
        <taxon>Aculeata</taxon>
        <taxon>Apoidea</taxon>
        <taxon>Anthophila</taxon>
        <taxon>Apidae</taxon>
        <taxon>Apis</taxon>
    </lineage>
</organism>
<accession>Q5DW47</accession>
<proteinExistence type="evidence at protein level"/>
<dbReference type="EMBL" id="AB201717">
    <property type="protein sequence ID" value="BAD90662.1"/>
    <property type="molecule type" value="mRNA"/>
</dbReference>
<dbReference type="RefSeq" id="NP_001012981.1">
    <property type="nucleotide sequence ID" value="NM_001012963.1"/>
</dbReference>
<dbReference type="STRING" id="7460.Q5DW47"/>
<dbReference type="PaxDb" id="7460-GB53951-PA"/>
<dbReference type="EnsemblMetazoa" id="NM_001012963">
    <property type="protein sequence ID" value="NP_001012981"/>
    <property type="gene ID" value="GeneID_503862"/>
</dbReference>
<dbReference type="GeneID" id="503862"/>
<dbReference type="KEGG" id="ame:503862"/>
<dbReference type="CTD" id="12973"/>
<dbReference type="eggNOG" id="ENOG502T9RC">
    <property type="taxonomic scope" value="Eukaryota"/>
</dbReference>
<dbReference type="InParanoid" id="Q5DW47"/>
<dbReference type="OrthoDB" id="6436322at2759"/>
<dbReference type="PhylomeDB" id="Q5DW47"/>
<dbReference type="Proteomes" id="UP000005203">
    <property type="component" value="Linkage group LG1"/>
</dbReference>
<dbReference type="GO" id="GO:0005576">
    <property type="term" value="C:extracellular region"/>
    <property type="evidence" value="ECO:0000250"/>
    <property type="project" value="UniProtKB"/>
</dbReference>
<dbReference type="GO" id="GO:0071858">
    <property type="term" value="F:corazonin receptor binding"/>
    <property type="evidence" value="ECO:0007669"/>
    <property type="project" value="InterPro"/>
</dbReference>
<dbReference type="GO" id="GO:0005184">
    <property type="term" value="F:neuropeptide hormone activity"/>
    <property type="evidence" value="ECO:0000250"/>
    <property type="project" value="UniProtKB"/>
</dbReference>
<dbReference type="GO" id="GO:0007218">
    <property type="term" value="P:neuropeptide signaling pathway"/>
    <property type="evidence" value="ECO:0007669"/>
    <property type="project" value="UniProtKB-KW"/>
</dbReference>
<dbReference type="GO" id="GO:0045823">
    <property type="term" value="P:positive regulation of heart contraction"/>
    <property type="evidence" value="ECO:0000250"/>
    <property type="project" value="UniProtKB"/>
</dbReference>
<dbReference type="InterPro" id="IPR020190">
    <property type="entry name" value="Procorazonin"/>
</dbReference>
<dbReference type="Pfam" id="PF17308">
    <property type="entry name" value="Corazonin"/>
    <property type="match status" value="1"/>
</dbReference>
<keyword id="KW-0027">Amidation</keyword>
<keyword id="KW-0165">Cleavage on pair of basic residues</keyword>
<keyword id="KW-0903">Direct protein sequencing</keyword>
<keyword id="KW-0527">Neuropeptide</keyword>
<keyword id="KW-0873">Pyrrolidone carboxylic acid</keyword>
<keyword id="KW-1185">Reference proteome</keyword>
<keyword id="KW-0964">Secreted</keyword>
<keyword id="KW-0732">Signal</keyword>
<reference evidence="6" key="1">
    <citation type="journal article" date="2006" name="Appl. Entomol. Zool. (Jpn.)">
        <title>Molecular cloning of [Thr4, His7]-corazonin (Apime-corazonin) and its distribution in the central nervous system of the honey bee Apis mellifera (Hymenoptera: Apidae).</title>
        <authorList>
            <person name="Roller L."/>
            <person name="Tanaka S."/>
            <person name="Kimura K."/>
            <person name="Satake H."/>
            <person name="Tanaka Y."/>
        </authorList>
    </citation>
    <scope>NUCLEOTIDE SEQUENCE [MRNA]</scope>
    <source>
        <tissue evidence="6">Brain</tissue>
    </source>
</reference>
<reference evidence="5" key="2">
    <citation type="journal article" date="2006" name="Peptides">
        <title>Cloning and characterization of a third isoform of corazonin in the honey bee Apis mellifera.</title>
        <authorList>
            <person name="Verleyen P."/>
            <person name="Baggerman G."/>
            <person name="Mertens I."/>
            <person name="Vandersmissen T."/>
            <person name="Huybrechts J."/>
            <person name="Van Lommel A."/>
            <person name="De Loof A."/>
            <person name="Schoofs L."/>
        </authorList>
    </citation>
    <scope>PROTEIN SEQUENCE OF 22-32</scope>
    <scope>PYROGLUTAMATE FORMATION AT GLN-22</scope>
    <scope>AMIDATION AT ASN-32</scope>
    <scope>TISSUE SPECIFICITY</scope>
    <scope>MASS SPECTROMETRY</scope>
</reference>
<reference evidence="5" key="3">
    <citation type="journal article" date="2006" name="Science">
        <title>From the genome to the proteome: uncovering peptides in the Apis brain.</title>
        <authorList>
            <person name="Hummon A.B."/>
            <person name="Richmond T.A."/>
            <person name="Verleyen P."/>
            <person name="Baggerman G."/>
            <person name="Huybrechts J."/>
            <person name="Ewing M.A."/>
            <person name="Vierstraete E."/>
            <person name="Rodriguez-Zas S.L."/>
            <person name="Schoofs L."/>
            <person name="Robinson G.E."/>
            <person name="Sweedler J.V."/>
        </authorList>
    </citation>
    <scope>PROTEIN SEQUENCE OF 22-32</scope>
    <scope>MASS SPECTROMETRY</scope>
    <source>
        <tissue evidence="4">Brain</tissue>
    </source>
</reference>
<evidence type="ECO:0000250" key="1">
    <source>
        <dbReference type="UniProtKB" id="Q26377"/>
    </source>
</evidence>
<evidence type="ECO:0000255" key="2"/>
<evidence type="ECO:0000269" key="3">
    <source>
    </source>
</evidence>
<evidence type="ECO:0000269" key="4">
    <source>
    </source>
</evidence>
<evidence type="ECO:0000305" key="5"/>
<evidence type="ECO:0000312" key="6">
    <source>
        <dbReference type="EMBL" id="BAD90662.1"/>
    </source>
</evidence>
<protein>
    <recommendedName>
        <fullName>Pro-corazonin</fullName>
        <shortName>AmCrz</shortName>
        <shortName>Crz</shortName>
    </recommendedName>
    <component>
        <recommendedName>
            <fullName>Corazonin</fullName>
        </recommendedName>
    </component>
    <component>
        <recommendedName>
            <fullName>Corazonin precursor-related peptide</fullName>
            <shortName>CPRP</shortName>
        </recommendedName>
    </component>
</protein>
<gene>
    <name evidence="1" type="primary">Crz</name>
    <name type="ORF">GB17245</name>
</gene>
<name>CORZ_APIME</name>
<comment type="function">
    <text evidence="1">Cardioactive peptide. Corazonin is probably involved in the physiological regulation of the heart beat (By similarity).</text>
</comment>
<comment type="subcellular location">
    <molecule>Corazonin</molecule>
    <subcellularLocation>
        <location>Secreted</location>
    </subcellularLocation>
</comment>
<comment type="subcellular location">
    <molecule>Corazonin precursor-related peptide</molecule>
    <subcellularLocation>
        <location evidence="1">Secreted</location>
    </subcellularLocation>
</comment>
<comment type="tissue specificity">
    <text evidence="3">In the adult brain, expressed in four neurons of the lateral protocerebrum project axons towards the retrocerebral complex.</text>
</comment>
<comment type="mass spectrometry">
    <molecule>Corazonin</molecule>
</comment>
<comment type="similarity">
    <text evidence="5">Belongs to the corazonin family.</text>
</comment>
<sequence>MVNSQILILFILSLTITIVMCQTFTYSHGWTNGKRSTSLEELANRNAIQSDNVFANCELQKLRLLLQGNINNQLFQTPCELLNFPKRSFSENMINDHRQPAPTNNNY</sequence>
<feature type="signal peptide" evidence="3 4">
    <location>
        <begin position="1"/>
        <end position="21"/>
    </location>
</feature>
<feature type="chain" id="PRO_0000341607" description="Pro-corazonin" evidence="2">
    <location>
        <begin position="22"/>
        <end position="107"/>
    </location>
</feature>
<feature type="peptide" id="PRO_5000052220" description="Corazonin" evidence="3">
    <location>
        <begin position="22"/>
        <end position="32"/>
    </location>
</feature>
<feature type="peptide" id="PRO_0000341495" description="Corazonin precursor-related peptide">
    <location>
        <begin position="36"/>
        <end position="85"/>
    </location>
</feature>
<feature type="propeptide" id="PRO_0000341496" evidence="3">
    <location>
        <begin position="88"/>
        <end position="107"/>
    </location>
</feature>
<feature type="modified residue" description="Pyrrolidone carboxylic acid" evidence="3">
    <location>
        <position position="22"/>
    </location>
</feature>
<feature type="modified residue" description="Asparagine amide" evidence="3">
    <location>
        <position position="32"/>
    </location>
</feature>